<proteinExistence type="evidence at transcript level"/>
<comment type="function">
    <text evidence="1">Intracellular vesicle trafficking and protein transport.</text>
</comment>
<comment type="subcellular location">
    <subcellularLocation>
        <location evidence="2">Cell membrane</location>
        <topology evidence="2">Lipid-anchor</topology>
        <orientation evidence="2">Cytoplasmic side</orientation>
    </subcellularLocation>
</comment>
<comment type="alternative products">
    <event type="alternative splicing"/>
    <isoform>
        <id>Q948K8-1</id>
        <name>1</name>
        <sequence type="displayed"/>
    </isoform>
    <isoform>
        <id>Q948K8-2</id>
        <name>2</name>
        <sequence type="described" ref="VSP_040948"/>
    </isoform>
</comment>
<comment type="similarity">
    <text evidence="2">Belongs to the small GTPase superfamily. Rab family.</text>
</comment>
<comment type="sequence caution" evidence="2">
    <conflict type="erroneous gene model prediction">
        <sequence resource="EMBL-CDS" id="CAB39639"/>
    </conflict>
</comment>
<comment type="sequence caution" evidence="2">
    <conflict type="erroneous gene model prediction">
        <sequence resource="EMBL-CDS" id="CAB78095"/>
    </conflict>
</comment>
<reference key="1">
    <citation type="submission" date="2001-09" db="EMBL/GenBank/DDBJ databases">
        <title>Rab7 homologs in Arabidopsis thaliana.</title>
        <authorList>
            <person name="Ueda T."/>
            <person name="Wada Y."/>
            <person name="Nakano A."/>
        </authorList>
    </citation>
    <scope>NUCLEOTIDE SEQUENCE [MRNA] (ISOFORM 1)</scope>
</reference>
<reference key="2">
    <citation type="journal article" date="1999" name="Nature">
        <title>Sequence and analysis of chromosome 4 of the plant Arabidopsis thaliana.</title>
        <authorList>
            <person name="Mayer K.F.X."/>
            <person name="Schueller C."/>
            <person name="Wambutt R."/>
            <person name="Murphy G."/>
            <person name="Volckaert G."/>
            <person name="Pohl T."/>
            <person name="Duesterhoeft A."/>
            <person name="Stiekema W."/>
            <person name="Entian K.-D."/>
            <person name="Terryn N."/>
            <person name="Harris B."/>
            <person name="Ansorge W."/>
            <person name="Brandt P."/>
            <person name="Grivell L.A."/>
            <person name="Rieger M."/>
            <person name="Weichselgartner M."/>
            <person name="de Simone V."/>
            <person name="Obermaier B."/>
            <person name="Mache R."/>
            <person name="Mueller M."/>
            <person name="Kreis M."/>
            <person name="Delseny M."/>
            <person name="Puigdomenech P."/>
            <person name="Watson M."/>
            <person name="Schmidtheini T."/>
            <person name="Reichert B."/>
            <person name="Portetelle D."/>
            <person name="Perez-Alonso M."/>
            <person name="Boutry M."/>
            <person name="Bancroft I."/>
            <person name="Vos P."/>
            <person name="Hoheisel J."/>
            <person name="Zimmermann W."/>
            <person name="Wedler H."/>
            <person name="Ridley P."/>
            <person name="Langham S.-A."/>
            <person name="McCullagh B."/>
            <person name="Bilham L."/>
            <person name="Robben J."/>
            <person name="van der Schueren J."/>
            <person name="Grymonprez B."/>
            <person name="Chuang Y.-J."/>
            <person name="Vandenbussche F."/>
            <person name="Braeken M."/>
            <person name="Weltjens I."/>
            <person name="Voet M."/>
            <person name="Bastiaens I."/>
            <person name="Aert R."/>
            <person name="Defoor E."/>
            <person name="Weitzenegger T."/>
            <person name="Bothe G."/>
            <person name="Ramsperger U."/>
            <person name="Hilbert H."/>
            <person name="Braun M."/>
            <person name="Holzer E."/>
            <person name="Brandt A."/>
            <person name="Peters S."/>
            <person name="van Staveren M."/>
            <person name="Dirkse W."/>
            <person name="Mooijman P."/>
            <person name="Klein Lankhorst R."/>
            <person name="Rose M."/>
            <person name="Hauf J."/>
            <person name="Koetter P."/>
            <person name="Berneiser S."/>
            <person name="Hempel S."/>
            <person name="Feldpausch M."/>
            <person name="Lamberth S."/>
            <person name="Van den Daele H."/>
            <person name="De Keyser A."/>
            <person name="Buysshaert C."/>
            <person name="Gielen J."/>
            <person name="Villarroel R."/>
            <person name="De Clercq R."/>
            <person name="van Montagu M."/>
            <person name="Rogers J."/>
            <person name="Cronin A."/>
            <person name="Quail M.A."/>
            <person name="Bray-Allen S."/>
            <person name="Clark L."/>
            <person name="Doggett J."/>
            <person name="Hall S."/>
            <person name="Kay M."/>
            <person name="Lennard N."/>
            <person name="McLay K."/>
            <person name="Mayes R."/>
            <person name="Pettett A."/>
            <person name="Rajandream M.A."/>
            <person name="Lyne M."/>
            <person name="Benes V."/>
            <person name="Rechmann S."/>
            <person name="Borkova D."/>
            <person name="Bloecker H."/>
            <person name="Scharfe M."/>
            <person name="Grimm M."/>
            <person name="Loehnert T.-H."/>
            <person name="Dose S."/>
            <person name="de Haan M."/>
            <person name="Maarse A.C."/>
            <person name="Schaefer M."/>
            <person name="Mueller-Auer S."/>
            <person name="Gabel C."/>
            <person name="Fuchs M."/>
            <person name="Fartmann B."/>
            <person name="Granderath K."/>
            <person name="Dauner D."/>
            <person name="Herzl A."/>
            <person name="Neumann S."/>
            <person name="Argiriou A."/>
            <person name="Vitale D."/>
            <person name="Liguori R."/>
            <person name="Piravandi E."/>
            <person name="Massenet O."/>
            <person name="Quigley F."/>
            <person name="Clabauld G."/>
            <person name="Muendlein A."/>
            <person name="Felber R."/>
            <person name="Schnabl S."/>
            <person name="Hiller R."/>
            <person name="Schmidt W."/>
            <person name="Lecharny A."/>
            <person name="Aubourg S."/>
            <person name="Chefdor F."/>
            <person name="Cooke R."/>
            <person name="Berger C."/>
            <person name="Monfort A."/>
            <person name="Casacuberta E."/>
            <person name="Gibbons T."/>
            <person name="Weber N."/>
            <person name="Vandenbol M."/>
            <person name="Bargues M."/>
            <person name="Terol J."/>
            <person name="Torres A."/>
            <person name="Perez-Perez A."/>
            <person name="Purnelle B."/>
            <person name="Bent E."/>
            <person name="Johnson S."/>
            <person name="Tacon D."/>
            <person name="Jesse T."/>
            <person name="Heijnen L."/>
            <person name="Schwarz S."/>
            <person name="Scholler P."/>
            <person name="Heber S."/>
            <person name="Francs P."/>
            <person name="Bielke C."/>
            <person name="Frishman D."/>
            <person name="Haase D."/>
            <person name="Lemcke K."/>
            <person name="Mewes H.-W."/>
            <person name="Stocker S."/>
            <person name="Zaccaria P."/>
            <person name="Bevan M."/>
            <person name="Wilson R.K."/>
            <person name="de la Bastide M."/>
            <person name="Habermann K."/>
            <person name="Parnell L."/>
            <person name="Dedhia N."/>
            <person name="Gnoj L."/>
            <person name="Schutz K."/>
            <person name="Huang E."/>
            <person name="Spiegel L."/>
            <person name="Sekhon M."/>
            <person name="Murray J."/>
            <person name="Sheet P."/>
            <person name="Cordes M."/>
            <person name="Abu-Threideh J."/>
            <person name="Stoneking T."/>
            <person name="Kalicki J."/>
            <person name="Graves T."/>
            <person name="Harmon G."/>
            <person name="Edwards J."/>
            <person name="Latreille P."/>
            <person name="Courtney L."/>
            <person name="Cloud J."/>
            <person name="Abbott A."/>
            <person name="Scott K."/>
            <person name="Johnson D."/>
            <person name="Minx P."/>
            <person name="Bentley D."/>
            <person name="Fulton B."/>
            <person name="Miller N."/>
            <person name="Greco T."/>
            <person name="Kemp K."/>
            <person name="Kramer J."/>
            <person name="Fulton L."/>
            <person name="Mardis E."/>
            <person name="Dante M."/>
            <person name="Pepin K."/>
            <person name="Hillier L.W."/>
            <person name="Nelson J."/>
            <person name="Spieth J."/>
            <person name="Ryan E."/>
            <person name="Andrews S."/>
            <person name="Geisel C."/>
            <person name="Layman D."/>
            <person name="Du H."/>
            <person name="Ali J."/>
            <person name="Berghoff A."/>
            <person name="Jones K."/>
            <person name="Drone K."/>
            <person name="Cotton M."/>
            <person name="Joshu C."/>
            <person name="Antonoiu B."/>
            <person name="Zidanic M."/>
            <person name="Strong C."/>
            <person name="Sun H."/>
            <person name="Lamar B."/>
            <person name="Yordan C."/>
            <person name="Ma P."/>
            <person name="Zhong J."/>
            <person name="Preston R."/>
            <person name="Vil D."/>
            <person name="Shekher M."/>
            <person name="Matero A."/>
            <person name="Shah R."/>
            <person name="Swaby I.K."/>
            <person name="O'Shaughnessy A."/>
            <person name="Rodriguez M."/>
            <person name="Hoffman J."/>
            <person name="Till S."/>
            <person name="Granat S."/>
            <person name="Shohdy N."/>
            <person name="Hasegawa A."/>
            <person name="Hameed A."/>
            <person name="Lodhi M."/>
            <person name="Johnson A."/>
            <person name="Chen E."/>
            <person name="Marra M.A."/>
            <person name="Martienssen R."/>
            <person name="McCombie W.R."/>
        </authorList>
    </citation>
    <scope>NUCLEOTIDE SEQUENCE [LARGE SCALE GENOMIC DNA]</scope>
    <source>
        <strain>cv. Columbia</strain>
    </source>
</reference>
<reference key="3">
    <citation type="journal article" date="2017" name="Plant J.">
        <title>Araport11: a complete reannotation of the Arabidopsis thaliana reference genome.</title>
        <authorList>
            <person name="Cheng C.Y."/>
            <person name="Krishnakumar V."/>
            <person name="Chan A.P."/>
            <person name="Thibaud-Nissen F."/>
            <person name="Schobel S."/>
            <person name="Town C.D."/>
        </authorList>
    </citation>
    <scope>GENOME REANNOTATION</scope>
    <source>
        <strain>cv. Columbia</strain>
    </source>
</reference>
<reference key="4">
    <citation type="submission" date="2006-07" db="EMBL/GenBank/DDBJ databases">
        <title>Large-scale analysis of RIKEN Arabidopsis full-length (RAFL) cDNAs.</title>
        <authorList>
            <person name="Totoki Y."/>
            <person name="Seki M."/>
            <person name="Ishida J."/>
            <person name="Nakajima M."/>
            <person name="Enju A."/>
            <person name="Kamiya A."/>
            <person name="Narusaka M."/>
            <person name="Shin-i T."/>
            <person name="Nakagawa M."/>
            <person name="Sakamoto N."/>
            <person name="Oishi K."/>
            <person name="Kohara Y."/>
            <person name="Kobayashi M."/>
            <person name="Toyoda A."/>
            <person name="Sakaki Y."/>
            <person name="Sakurai T."/>
            <person name="Iida K."/>
            <person name="Akiyama K."/>
            <person name="Satou M."/>
            <person name="Toyoda T."/>
            <person name="Konagaya A."/>
            <person name="Carninci P."/>
            <person name="Kawai J."/>
            <person name="Hayashizaki Y."/>
            <person name="Shinozaki K."/>
        </authorList>
    </citation>
    <scope>NUCLEOTIDE SEQUENCE [LARGE SCALE MRNA] (ISOFORM 1)</scope>
    <source>
        <strain>cv. Columbia</strain>
    </source>
</reference>
<reference key="5">
    <citation type="submission" date="2006-12" db="EMBL/GenBank/DDBJ databases">
        <title>Arabidopsis ORF clones.</title>
        <authorList>
            <person name="Bautista V.R."/>
            <person name="Kim C.J."/>
            <person name="Chen H."/>
            <person name="Quinitio C."/>
            <person name="Ecker J.R."/>
        </authorList>
    </citation>
    <scope>NUCLEOTIDE SEQUENCE [LARGE SCALE MRNA] (ISOFORM 1)</scope>
    <source>
        <strain>cv. Columbia</strain>
    </source>
</reference>
<reference key="6">
    <citation type="submission" date="2007-01" db="EMBL/GenBank/DDBJ databases">
        <title>Arabidopsis ORF clones.</title>
        <authorList>
            <person name="Bautista V.R."/>
            <person name="Kim C.J."/>
            <person name="Chen H."/>
            <person name="Wu S.Y."/>
            <person name="De Los Reyes C."/>
            <person name="Ecker J.R."/>
        </authorList>
    </citation>
    <scope>NUCLEOTIDE SEQUENCE [LARGE SCALE MRNA] OF 35-206</scope>
    <source>
        <strain>cv. Columbia</strain>
    </source>
</reference>
<reference key="7">
    <citation type="journal article" date="2003" name="Plant Physiol.">
        <title>Analysis of the small GTPase gene superfamily of Arabidopsis.</title>
        <authorList>
            <person name="Vernoud V."/>
            <person name="Horton A.C."/>
            <person name="Yang Z."/>
            <person name="Nielsen E."/>
        </authorList>
    </citation>
    <scope>GENE FAMILY</scope>
    <scope>NOMENCLATURE</scope>
</reference>
<sequence length="206" mass="22751">MATRRRTLLKVIVLGDSGVGKTSLMNQYVHKKFSMQYKATIGADFVTKELQIGEKLVTLQIWDTAGQERFQSLGAAFYRGADCCALVYDVNVLRSFDNLETWHEEFLKQASPSDPKTFPFIVLGNKIDVDGGSSRVVSDKKAADWCASNGNIPYFETSAKDDFNVDEAFLTIAKTALANEHEQDIYFQGIPDAVTENEPKGGGCAC</sequence>
<gene>
    <name type="primary">RABG3A</name>
    <name type="synonym">RAB76</name>
    <name type="ordered locus">At4g09720</name>
    <name type="ORF">F17A8.70</name>
</gene>
<protein>
    <recommendedName>
        <fullName>Ras-related protein RABG3a</fullName>
        <shortName>AtRABG3a</shortName>
    </recommendedName>
    <alternativeName>
        <fullName>Ras-related protein Rab76</fullName>
        <shortName>AtRab76</shortName>
    </alternativeName>
</protein>
<organism>
    <name type="scientific">Arabidopsis thaliana</name>
    <name type="common">Mouse-ear cress</name>
    <dbReference type="NCBI Taxonomy" id="3702"/>
    <lineage>
        <taxon>Eukaryota</taxon>
        <taxon>Viridiplantae</taxon>
        <taxon>Streptophyta</taxon>
        <taxon>Embryophyta</taxon>
        <taxon>Tracheophyta</taxon>
        <taxon>Spermatophyta</taxon>
        <taxon>Magnoliopsida</taxon>
        <taxon>eudicotyledons</taxon>
        <taxon>Gunneridae</taxon>
        <taxon>Pentapetalae</taxon>
        <taxon>rosids</taxon>
        <taxon>malvids</taxon>
        <taxon>Brassicales</taxon>
        <taxon>Brassicaceae</taxon>
        <taxon>Camelineae</taxon>
        <taxon>Arabidopsis</taxon>
    </lineage>
</organism>
<name>RAG3A_ARATH</name>
<keyword id="KW-0025">Alternative splicing</keyword>
<keyword id="KW-1003">Cell membrane</keyword>
<keyword id="KW-0342">GTP-binding</keyword>
<keyword id="KW-0449">Lipoprotein</keyword>
<keyword id="KW-0472">Membrane</keyword>
<keyword id="KW-0488">Methylation</keyword>
<keyword id="KW-0547">Nucleotide-binding</keyword>
<keyword id="KW-0636">Prenylation</keyword>
<keyword id="KW-0653">Protein transport</keyword>
<keyword id="KW-1185">Reference proteome</keyword>
<keyword id="KW-0813">Transport</keyword>
<evidence type="ECO:0000250" key="1"/>
<evidence type="ECO:0000305" key="2"/>
<feature type="chain" id="PRO_0000407362" description="Ras-related protein RABG3a">
    <location>
        <begin position="1"/>
        <end position="206"/>
    </location>
</feature>
<feature type="short sequence motif" description="Effector region" evidence="1">
    <location>
        <begin position="37"/>
        <end position="45"/>
    </location>
</feature>
<feature type="binding site" evidence="1">
    <location>
        <begin position="15"/>
        <end position="22"/>
    </location>
    <ligand>
        <name>GTP</name>
        <dbReference type="ChEBI" id="CHEBI:37565"/>
    </ligand>
</feature>
<feature type="binding site" evidence="1">
    <location>
        <begin position="63"/>
        <end position="67"/>
    </location>
    <ligand>
        <name>GTP</name>
        <dbReference type="ChEBI" id="CHEBI:37565"/>
    </ligand>
</feature>
<feature type="binding site" evidence="1">
    <location>
        <begin position="125"/>
        <end position="128"/>
    </location>
    <ligand>
        <name>GTP</name>
        <dbReference type="ChEBI" id="CHEBI:37565"/>
    </ligand>
</feature>
<feature type="binding site" evidence="1">
    <location>
        <begin position="158"/>
        <end position="159"/>
    </location>
    <ligand>
        <name>GTP</name>
        <dbReference type="ChEBI" id="CHEBI:37565"/>
    </ligand>
</feature>
<feature type="modified residue" description="Cysteine methyl ester" evidence="1">
    <location>
        <position position="206"/>
    </location>
</feature>
<feature type="lipid moiety-binding region" description="S-geranylgeranyl cysteine" evidence="1">
    <location>
        <position position="204"/>
    </location>
</feature>
<feature type="lipid moiety-binding region" description="S-geranylgeranyl cysteine" evidence="1">
    <location>
        <position position="206"/>
    </location>
</feature>
<feature type="splice variant" id="VSP_040948" description="In isoform 2." evidence="2">
    <location>
        <begin position="1"/>
        <end position="34"/>
    </location>
</feature>
<accession>Q948K8</accession>
<accession>A2RVP8</accession>
<accession>Q3EA61</accession>
<accession>Q9SZ88</accession>
<dbReference type="EMBL" id="AB071851">
    <property type="protein sequence ID" value="BAB68376.1"/>
    <property type="molecule type" value="mRNA"/>
</dbReference>
<dbReference type="EMBL" id="AL049482">
    <property type="protein sequence ID" value="CAB39639.1"/>
    <property type="status" value="ALT_SEQ"/>
    <property type="molecule type" value="Genomic_DNA"/>
</dbReference>
<dbReference type="EMBL" id="AL161515">
    <property type="protein sequence ID" value="CAB78095.1"/>
    <property type="status" value="ALT_SEQ"/>
    <property type="molecule type" value="Genomic_DNA"/>
</dbReference>
<dbReference type="EMBL" id="CP002687">
    <property type="protein sequence ID" value="AEE82783.1"/>
    <property type="molecule type" value="Genomic_DNA"/>
</dbReference>
<dbReference type="EMBL" id="CP002687">
    <property type="protein sequence ID" value="AEE82784.1"/>
    <property type="molecule type" value="Genomic_DNA"/>
</dbReference>
<dbReference type="EMBL" id="CP002687">
    <property type="protein sequence ID" value="ANM66968.1"/>
    <property type="molecule type" value="Genomic_DNA"/>
</dbReference>
<dbReference type="EMBL" id="CP002687">
    <property type="protein sequence ID" value="ANM66969.1"/>
    <property type="molecule type" value="Genomic_DNA"/>
</dbReference>
<dbReference type="EMBL" id="AK229171">
    <property type="protein sequence ID" value="BAF01041.1"/>
    <property type="molecule type" value="mRNA"/>
</dbReference>
<dbReference type="EMBL" id="BT029504">
    <property type="protein sequence ID" value="ABL66760.1"/>
    <property type="molecule type" value="mRNA"/>
</dbReference>
<dbReference type="EMBL" id="BT030039">
    <property type="protein sequence ID" value="ABN04777.1"/>
    <property type="molecule type" value="mRNA"/>
</dbReference>
<dbReference type="PIR" id="T04019">
    <property type="entry name" value="T04019"/>
</dbReference>
<dbReference type="RefSeq" id="NP_001319888.1">
    <molecule id="Q948K8-2"/>
    <property type="nucleotide sequence ID" value="NM_001340630.1"/>
</dbReference>
<dbReference type="RefSeq" id="NP_001328831.1">
    <molecule id="Q948K8-2"/>
    <property type="nucleotide sequence ID" value="NM_001340631.1"/>
</dbReference>
<dbReference type="RefSeq" id="NP_192710.1">
    <molecule id="Q948K8-1"/>
    <property type="nucleotide sequence ID" value="NM_117040.4"/>
</dbReference>
<dbReference type="RefSeq" id="NP_849347.1">
    <molecule id="Q948K8-2"/>
    <property type="nucleotide sequence ID" value="NM_179016.1"/>
</dbReference>
<dbReference type="SMR" id="Q948K8"/>
<dbReference type="FunCoup" id="Q948K8">
    <property type="interactions" value="4178"/>
</dbReference>
<dbReference type="STRING" id="3702.Q948K8"/>
<dbReference type="iPTMnet" id="Q948K8"/>
<dbReference type="PaxDb" id="3702-AT4G09720.3"/>
<dbReference type="ProteomicsDB" id="235092">
    <molecule id="Q948K8-1"/>
</dbReference>
<dbReference type="EnsemblPlants" id="AT4G09720.1">
    <molecule id="Q948K8-1"/>
    <property type="protein sequence ID" value="AT4G09720.1"/>
    <property type="gene ID" value="AT4G09720"/>
</dbReference>
<dbReference type="EnsemblPlants" id="AT4G09720.2">
    <molecule id="Q948K8-2"/>
    <property type="protein sequence ID" value="AT4G09720.2"/>
    <property type="gene ID" value="AT4G09720"/>
</dbReference>
<dbReference type="EnsemblPlants" id="AT4G09720.5">
    <molecule id="Q948K8-2"/>
    <property type="protein sequence ID" value="AT4G09720.5"/>
    <property type="gene ID" value="AT4G09720"/>
</dbReference>
<dbReference type="EnsemblPlants" id="AT4G09720.6">
    <molecule id="Q948K8-2"/>
    <property type="protein sequence ID" value="AT4G09720.6"/>
    <property type="gene ID" value="AT4G09720"/>
</dbReference>
<dbReference type="GeneID" id="826558"/>
<dbReference type="Gramene" id="AT4G09720.1">
    <molecule id="Q948K8-1"/>
    <property type="protein sequence ID" value="AT4G09720.1"/>
    <property type="gene ID" value="AT4G09720"/>
</dbReference>
<dbReference type="Gramene" id="AT4G09720.2">
    <molecule id="Q948K8-2"/>
    <property type="protein sequence ID" value="AT4G09720.2"/>
    <property type="gene ID" value="AT4G09720"/>
</dbReference>
<dbReference type="Gramene" id="AT4G09720.5">
    <molecule id="Q948K8-2"/>
    <property type="protein sequence ID" value="AT4G09720.5"/>
    <property type="gene ID" value="AT4G09720"/>
</dbReference>
<dbReference type="Gramene" id="AT4G09720.6">
    <molecule id="Q948K8-2"/>
    <property type="protein sequence ID" value="AT4G09720.6"/>
    <property type="gene ID" value="AT4G09720"/>
</dbReference>
<dbReference type="KEGG" id="ath:AT4G09720"/>
<dbReference type="Araport" id="AT4G09720"/>
<dbReference type="TAIR" id="AT4G09720">
    <property type="gene designation" value="RABG3A"/>
</dbReference>
<dbReference type="eggNOG" id="KOG0394">
    <property type="taxonomic scope" value="Eukaryota"/>
</dbReference>
<dbReference type="HOGENOM" id="CLU_041217_10_6_1"/>
<dbReference type="InParanoid" id="Q948K8"/>
<dbReference type="OMA" id="DCCVIVY"/>
<dbReference type="OrthoDB" id="1436450at2759"/>
<dbReference type="PhylomeDB" id="Q948K8"/>
<dbReference type="PRO" id="PR:Q948K8"/>
<dbReference type="Proteomes" id="UP000006548">
    <property type="component" value="Chromosome 4"/>
</dbReference>
<dbReference type="ExpressionAtlas" id="Q948K8">
    <property type="expression patterns" value="baseline and differential"/>
</dbReference>
<dbReference type="GO" id="GO:0005886">
    <property type="term" value="C:plasma membrane"/>
    <property type="evidence" value="ECO:0007669"/>
    <property type="project" value="UniProtKB-SubCell"/>
</dbReference>
<dbReference type="GO" id="GO:0005525">
    <property type="term" value="F:GTP binding"/>
    <property type="evidence" value="ECO:0007669"/>
    <property type="project" value="UniProtKB-KW"/>
</dbReference>
<dbReference type="GO" id="GO:0003924">
    <property type="term" value="F:GTPase activity"/>
    <property type="evidence" value="ECO:0007669"/>
    <property type="project" value="InterPro"/>
</dbReference>
<dbReference type="GO" id="GO:0015031">
    <property type="term" value="P:protein transport"/>
    <property type="evidence" value="ECO:0007669"/>
    <property type="project" value="UniProtKB-KW"/>
</dbReference>
<dbReference type="CDD" id="cd01862">
    <property type="entry name" value="Rab7"/>
    <property type="match status" value="1"/>
</dbReference>
<dbReference type="FunFam" id="3.40.50.300:FF:000295">
    <property type="entry name" value="Ras-related protein Rab7"/>
    <property type="match status" value="1"/>
</dbReference>
<dbReference type="Gene3D" id="3.40.50.300">
    <property type="entry name" value="P-loop containing nucleotide triphosphate hydrolases"/>
    <property type="match status" value="1"/>
</dbReference>
<dbReference type="InterPro" id="IPR027417">
    <property type="entry name" value="P-loop_NTPase"/>
</dbReference>
<dbReference type="InterPro" id="IPR005225">
    <property type="entry name" value="Small_GTP-bd"/>
</dbReference>
<dbReference type="InterPro" id="IPR001806">
    <property type="entry name" value="Small_GTPase"/>
</dbReference>
<dbReference type="NCBIfam" id="TIGR00231">
    <property type="entry name" value="small_GTP"/>
    <property type="match status" value="1"/>
</dbReference>
<dbReference type="PANTHER" id="PTHR47981">
    <property type="entry name" value="RAB FAMILY"/>
    <property type="match status" value="1"/>
</dbReference>
<dbReference type="PANTHER" id="PTHR47981:SF36">
    <property type="entry name" value="RAS-RELATED PROTEIN RABG1-RELATED"/>
    <property type="match status" value="1"/>
</dbReference>
<dbReference type="Pfam" id="PF00071">
    <property type="entry name" value="Ras"/>
    <property type="match status" value="1"/>
</dbReference>
<dbReference type="PRINTS" id="PR00449">
    <property type="entry name" value="RASTRNSFRMNG"/>
</dbReference>
<dbReference type="SMART" id="SM00175">
    <property type="entry name" value="RAB"/>
    <property type="match status" value="1"/>
</dbReference>
<dbReference type="SMART" id="SM00176">
    <property type="entry name" value="RAN"/>
    <property type="match status" value="1"/>
</dbReference>
<dbReference type="SMART" id="SM00173">
    <property type="entry name" value="RAS"/>
    <property type="match status" value="1"/>
</dbReference>
<dbReference type="SMART" id="SM00174">
    <property type="entry name" value="RHO"/>
    <property type="match status" value="1"/>
</dbReference>
<dbReference type="SUPFAM" id="SSF52540">
    <property type="entry name" value="P-loop containing nucleoside triphosphate hydrolases"/>
    <property type="match status" value="1"/>
</dbReference>
<dbReference type="PROSITE" id="PS51419">
    <property type="entry name" value="RAB"/>
    <property type="match status" value="1"/>
</dbReference>